<gene>
    <name type="primary">pgr1</name>
    <name type="ORF">pi039</name>
    <name type="ORF">SPBC17A3.07</name>
</gene>
<comment type="function">
    <text evidence="5">Catalyzes the reduction of glutathione disulfide (GSSG) to reduced glutathione (GSH). Constitutes the major mechanism to maintain a high GSH:GSSG ratio in the cytosol.</text>
</comment>
<comment type="catalytic activity">
    <reaction evidence="5">
        <text>2 glutathione + NADP(+) = glutathione disulfide + NADPH + H(+)</text>
        <dbReference type="Rhea" id="RHEA:11740"/>
        <dbReference type="ChEBI" id="CHEBI:15378"/>
        <dbReference type="ChEBI" id="CHEBI:57783"/>
        <dbReference type="ChEBI" id="CHEBI:57925"/>
        <dbReference type="ChEBI" id="CHEBI:58297"/>
        <dbReference type="ChEBI" id="CHEBI:58349"/>
        <dbReference type="EC" id="1.8.1.7"/>
    </reaction>
    <physiologicalReaction direction="right-to-left" evidence="5">
        <dbReference type="Rhea" id="RHEA:11742"/>
    </physiologicalReaction>
</comment>
<comment type="cofactor">
    <cofactor evidence="3">
        <name>FAD</name>
        <dbReference type="ChEBI" id="CHEBI:57692"/>
    </cofactor>
    <text evidence="3">Binds 1 FAD per subunit.</text>
</comment>
<comment type="subunit">
    <text evidence="3">Homodimer.</text>
</comment>
<comment type="subcellular location">
    <subcellularLocation>
        <location evidence="4">Cytoplasm</location>
    </subcellularLocation>
    <subcellularLocation>
        <location evidence="4">Mitochondrion</location>
    </subcellularLocation>
</comment>
<comment type="disruption phenotype">
    <text evidence="4">Required for cell survival. Causes proliferation arrest at the G1 phase of the cell cycle under aerobic conditions.</text>
</comment>
<comment type="miscellaneous">
    <text evidence="3">The active site is a redox-active disulfide bond.</text>
</comment>
<comment type="similarity">
    <text evidence="6">Belongs to the class-I pyridine nucleotide-disulfide oxidoreductase family.</text>
</comment>
<reference key="1">
    <citation type="journal article" date="1997" name="J. Biol. Chem.">
        <title>Isolation, expression, and regulation of the pgr1(+) gene encoding glutathione reductase absolutely required for the growth of Schizosaccharomyces pombe.</title>
        <authorList>
            <person name="Lee J."/>
            <person name="Dawes I.W."/>
            <person name="Roe J.-H."/>
        </authorList>
    </citation>
    <scope>NUCLEOTIDE SEQUENCE [GENOMIC DNA]</scope>
    <scope>FUNCTION</scope>
    <scope>CATALYTIC ACTIVITY</scope>
    <source>
        <strain>972 / ATCC 24843</strain>
    </source>
</reference>
<reference key="2">
    <citation type="journal article" date="2000" name="Yeast">
        <title>A 38 kb segment containing the cdc2 gene from the left arm of fission yeast chromosome II: sequence analysis and characterization of the genomic DNA and cDNAs encoded on the segment.</title>
        <authorList>
            <person name="Machida M."/>
            <person name="Yamazaki S."/>
            <person name="Kunihiro S."/>
            <person name="Tanaka T."/>
            <person name="Kushida N."/>
            <person name="Jinno K."/>
            <person name="Haikawa Y."/>
            <person name="Yamazaki J."/>
            <person name="Yamamoto S."/>
            <person name="Sekine M."/>
            <person name="Oguchi A."/>
            <person name="Nagai Y."/>
            <person name="Sakai M."/>
            <person name="Aoki K."/>
            <person name="Ogura K."/>
            <person name="Kudoh Y."/>
            <person name="Kikuchi H."/>
            <person name="Zhang M.Q."/>
            <person name="Yanagida M."/>
        </authorList>
    </citation>
    <scope>NUCLEOTIDE SEQUENCE [LARGE SCALE GENOMIC DNA]</scope>
    <source>
        <strain>972 / ATCC 24843</strain>
    </source>
</reference>
<reference key="3">
    <citation type="journal article" date="2002" name="Nature">
        <title>The genome sequence of Schizosaccharomyces pombe.</title>
        <authorList>
            <person name="Wood V."/>
            <person name="Gwilliam R."/>
            <person name="Rajandream M.A."/>
            <person name="Lyne M.H."/>
            <person name="Lyne R."/>
            <person name="Stewart A."/>
            <person name="Sgouros J.G."/>
            <person name="Peat N."/>
            <person name="Hayles J."/>
            <person name="Baker S.G."/>
            <person name="Basham D."/>
            <person name="Bowman S."/>
            <person name="Brooks K."/>
            <person name="Brown D."/>
            <person name="Brown S."/>
            <person name="Chillingworth T."/>
            <person name="Churcher C.M."/>
            <person name="Collins M."/>
            <person name="Connor R."/>
            <person name="Cronin A."/>
            <person name="Davis P."/>
            <person name="Feltwell T."/>
            <person name="Fraser A."/>
            <person name="Gentles S."/>
            <person name="Goble A."/>
            <person name="Hamlin N."/>
            <person name="Harris D.E."/>
            <person name="Hidalgo J."/>
            <person name="Hodgson G."/>
            <person name="Holroyd S."/>
            <person name="Hornsby T."/>
            <person name="Howarth S."/>
            <person name="Huckle E.J."/>
            <person name="Hunt S."/>
            <person name="Jagels K."/>
            <person name="James K.D."/>
            <person name="Jones L."/>
            <person name="Jones M."/>
            <person name="Leather S."/>
            <person name="McDonald S."/>
            <person name="McLean J."/>
            <person name="Mooney P."/>
            <person name="Moule S."/>
            <person name="Mungall K.L."/>
            <person name="Murphy L.D."/>
            <person name="Niblett D."/>
            <person name="Odell C."/>
            <person name="Oliver K."/>
            <person name="O'Neil S."/>
            <person name="Pearson D."/>
            <person name="Quail M.A."/>
            <person name="Rabbinowitsch E."/>
            <person name="Rutherford K.M."/>
            <person name="Rutter S."/>
            <person name="Saunders D."/>
            <person name="Seeger K."/>
            <person name="Sharp S."/>
            <person name="Skelton J."/>
            <person name="Simmonds M.N."/>
            <person name="Squares R."/>
            <person name="Squares S."/>
            <person name="Stevens K."/>
            <person name="Taylor K."/>
            <person name="Taylor R.G."/>
            <person name="Tivey A."/>
            <person name="Walsh S.V."/>
            <person name="Warren T."/>
            <person name="Whitehead S."/>
            <person name="Woodward J.R."/>
            <person name="Volckaert G."/>
            <person name="Aert R."/>
            <person name="Robben J."/>
            <person name="Grymonprez B."/>
            <person name="Weltjens I."/>
            <person name="Vanstreels E."/>
            <person name="Rieger M."/>
            <person name="Schaefer M."/>
            <person name="Mueller-Auer S."/>
            <person name="Gabel C."/>
            <person name="Fuchs M."/>
            <person name="Duesterhoeft A."/>
            <person name="Fritzc C."/>
            <person name="Holzer E."/>
            <person name="Moestl D."/>
            <person name="Hilbert H."/>
            <person name="Borzym K."/>
            <person name="Langer I."/>
            <person name="Beck A."/>
            <person name="Lehrach H."/>
            <person name="Reinhardt R."/>
            <person name="Pohl T.M."/>
            <person name="Eger P."/>
            <person name="Zimmermann W."/>
            <person name="Wedler H."/>
            <person name="Wambutt R."/>
            <person name="Purnelle B."/>
            <person name="Goffeau A."/>
            <person name="Cadieu E."/>
            <person name="Dreano S."/>
            <person name="Gloux S."/>
            <person name="Lelaure V."/>
            <person name="Mottier S."/>
            <person name="Galibert F."/>
            <person name="Aves S.J."/>
            <person name="Xiang Z."/>
            <person name="Hunt C."/>
            <person name="Moore K."/>
            <person name="Hurst S.M."/>
            <person name="Lucas M."/>
            <person name="Rochet M."/>
            <person name="Gaillardin C."/>
            <person name="Tallada V.A."/>
            <person name="Garzon A."/>
            <person name="Thode G."/>
            <person name="Daga R.R."/>
            <person name="Cruzado L."/>
            <person name="Jimenez J."/>
            <person name="Sanchez M."/>
            <person name="del Rey F."/>
            <person name="Benito J."/>
            <person name="Dominguez A."/>
            <person name="Revuelta J.L."/>
            <person name="Moreno S."/>
            <person name="Armstrong J."/>
            <person name="Forsburg S.L."/>
            <person name="Cerutti L."/>
            <person name="Lowe T."/>
            <person name="McCombie W.R."/>
            <person name="Paulsen I."/>
            <person name="Potashkin J."/>
            <person name="Shpakovski G.V."/>
            <person name="Ussery D."/>
            <person name="Barrell B.G."/>
            <person name="Nurse P."/>
        </authorList>
    </citation>
    <scope>NUCLEOTIDE SEQUENCE [LARGE SCALE GENOMIC DNA]</scope>
    <source>
        <strain>972 / ATCC 24843</strain>
    </source>
</reference>
<reference key="4">
    <citation type="journal article" date="2006" name="Eukaryot. Cell">
        <title>Glutathione reductase and a mitochondrial thioredoxin play overlapping roles in maintaining iron-sulfur enzymes in fission yeast.</title>
        <authorList>
            <person name="Song J.Y."/>
            <person name="Cha J."/>
            <person name="Lee J."/>
            <person name="Roe J.H."/>
        </authorList>
    </citation>
    <scope>SUBCELLULAR LOCATION</scope>
    <scope>DISRUPTION PHENOTYPE</scope>
</reference>
<dbReference type="EC" id="1.8.1.7" evidence="5"/>
<dbReference type="EMBL" id="U63845">
    <property type="protein sequence ID" value="AAC49809.1"/>
    <property type="molecule type" value="Genomic_DNA"/>
</dbReference>
<dbReference type="EMBL" id="AB004537">
    <property type="protein sequence ID" value="BAA21419.1"/>
    <property type="molecule type" value="Genomic_DNA"/>
</dbReference>
<dbReference type="EMBL" id="CU329671">
    <property type="protein sequence ID" value="CAK9839881.1"/>
    <property type="molecule type" value="Genomic_DNA"/>
</dbReference>
<dbReference type="PIR" id="T39699">
    <property type="entry name" value="T39699"/>
</dbReference>
<dbReference type="RefSeq" id="NP_595589.1">
    <property type="nucleotide sequence ID" value="NM_001021485.2"/>
</dbReference>
<dbReference type="SMR" id="P78965"/>
<dbReference type="BioGRID" id="276692">
    <property type="interactions" value="14"/>
</dbReference>
<dbReference type="FunCoup" id="P78965">
    <property type="interactions" value="513"/>
</dbReference>
<dbReference type="STRING" id="284812.P78965"/>
<dbReference type="PaxDb" id="4896-SPBC17A3.07.1"/>
<dbReference type="EnsemblFungi" id="SPBC17A3.07.1">
    <property type="protein sequence ID" value="SPBC17A3.07.1:pep"/>
    <property type="gene ID" value="SPBC17A3.07"/>
</dbReference>
<dbReference type="GeneID" id="2540156"/>
<dbReference type="KEGG" id="spo:2540156"/>
<dbReference type="PomBase" id="SPBC17A3.07">
    <property type="gene designation" value="pgr1"/>
</dbReference>
<dbReference type="VEuPathDB" id="FungiDB:SPBC17A3.07"/>
<dbReference type="eggNOG" id="KOG0405">
    <property type="taxonomic scope" value="Eukaryota"/>
</dbReference>
<dbReference type="HOGENOM" id="CLU_016755_2_2_1"/>
<dbReference type="InParanoid" id="P78965"/>
<dbReference type="OMA" id="MSKHYDY"/>
<dbReference type="PhylomeDB" id="P78965"/>
<dbReference type="Reactome" id="R-SPO-3299685">
    <property type="pathway name" value="Detoxification of Reactive Oxygen Species"/>
</dbReference>
<dbReference type="Reactome" id="R-SPO-499943">
    <property type="pathway name" value="Interconversion of nucleotide di- and triphosphates"/>
</dbReference>
<dbReference type="Reactome" id="R-SPO-5628897">
    <property type="pathway name" value="TP53 Regulates Metabolic Genes"/>
</dbReference>
<dbReference type="PRO" id="PR:P78965"/>
<dbReference type="Proteomes" id="UP000002485">
    <property type="component" value="Chromosome II"/>
</dbReference>
<dbReference type="GO" id="GO:0005737">
    <property type="term" value="C:cytoplasm"/>
    <property type="evidence" value="ECO:0007669"/>
    <property type="project" value="UniProtKB-KW"/>
</dbReference>
<dbReference type="GO" id="GO:0005829">
    <property type="term" value="C:cytosol"/>
    <property type="evidence" value="ECO:0000314"/>
    <property type="project" value="PomBase"/>
</dbReference>
<dbReference type="GO" id="GO:0005739">
    <property type="term" value="C:mitochondrion"/>
    <property type="evidence" value="ECO:0000314"/>
    <property type="project" value="PomBase"/>
</dbReference>
<dbReference type="GO" id="GO:0050660">
    <property type="term" value="F:flavin adenine dinucleotide binding"/>
    <property type="evidence" value="ECO:0007669"/>
    <property type="project" value="InterPro"/>
</dbReference>
<dbReference type="GO" id="GO:0004362">
    <property type="term" value="F:glutathione-disulfide reductase (NADPH) activity"/>
    <property type="evidence" value="ECO:0007669"/>
    <property type="project" value="InterPro"/>
</dbReference>
<dbReference type="GO" id="GO:0050661">
    <property type="term" value="F:NADP binding"/>
    <property type="evidence" value="ECO:0007669"/>
    <property type="project" value="InterPro"/>
</dbReference>
<dbReference type="GO" id="GO:0045454">
    <property type="term" value="P:cell redox homeostasis"/>
    <property type="evidence" value="ECO:0007669"/>
    <property type="project" value="InterPro"/>
</dbReference>
<dbReference type="GO" id="GO:0098869">
    <property type="term" value="P:cellular oxidant detoxification"/>
    <property type="evidence" value="ECO:0000305"/>
    <property type="project" value="PomBase"/>
</dbReference>
<dbReference type="GO" id="GO:0036245">
    <property type="term" value="P:cellular response to menadione"/>
    <property type="evidence" value="ECO:0000315"/>
    <property type="project" value="PomBase"/>
</dbReference>
<dbReference type="GO" id="GO:0034599">
    <property type="term" value="P:cellular response to oxidative stress"/>
    <property type="evidence" value="ECO:0000318"/>
    <property type="project" value="GO_Central"/>
</dbReference>
<dbReference type="GO" id="GO:0006749">
    <property type="term" value="P:glutathione metabolic process"/>
    <property type="evidence" value="ECO:0007669"/>
    <property type="project" value="InterPro"/>
</dbReference>
<dbReference type="FunFam" id="3.30.390.30:FF:000003">
    <property type="entry name" value="Glutathione reductase"/>
    <property type="match status" value="1"/>
</dbReference>
<dbReference type="FunFam" id="3.50.50.60:FF:000109">
    <property type="entry name" value="Glutathione reductase"/>
    <property type="match status" value="1"/>
</dbReference>
<dbReference type="Gene3D" id="3.30.390.30">
    <property type="match status" value="1"/>
</dbReference>
<dbReference type="Gene3D" id="3.50.50.60">
    <property type="entry name" value="FAD/NAD(P)-binding domain"/>
    <property type="match status" value="2"/>
</dbReference>
<dbReference type="InterPro" id="IPR036188">
    <property type="entry name" value="FAD/NAD-bd_sf"/>
</dbReference>
<dbReference type="InterPro" id="IPR023753">
    <property type="entry name" value="FAD/NAD-binding_dom"/>
</dbReference>
<dbReference type="InterPro" id="IPR016156">
    <property type="entry name" value="FAD/NAD-linked_Rdtase_dimer_sf"/>
</dbReference>
<dbReference type="InterPro" id="IPR006322">
    <property type="entry name" value="Glutathione_Rdtase_euk/bac"/>
</dbReference>
<dbReference type="InterPro" id="IPR046952">
    <property type="entry name" value="GSHR/TRXR-like"/>
</dbReference>
<dbReference type="InterPro" id="IPR001100">
    <property type="entry name" value="Pyr_nuc-diS_OxRdtase"/>
</dbReference>
<dbReference type="InterPro" id="IPR004099">
    <property type="entry name" value="Pyr_nucl-diS_OxRdtase_dimer"/>
</dbReference>
<dbReference type="InterPro" id="IPR012999">
    <property type="entry name" value="Pyr_OxRdtase_I_AS"/>
</dbReference>
<dbReference type="NCBIfam" id="TIGR01421">
    <property type="entry name" value="gluta_reduc_1"/>
    <property type="match status" value="1"/>
</dbReference>
<dbReference type="NCBIfam" id="NF004776">
    <property type="entry name" value="PRK06116.1"/>
    <property type="match status" value="1"/>
</dbReference>
<dbReference type="PANTHER" id="PTHR42737">
    <property type="entry name" value="GLUTATHIONE REDUCTASE"/>
    <property type="match status" value="1"/>
</dbReference>
<dbReference type="PANTHER" id="PTHR42737:SF2">
    <property type="entry name" value="GLUTATHIONE REDUCTASE"/>
    <property type="match status" value="1"/>
</dbReference>
<dbReference type="Pfam" id="PF07992">
    <property type="entry name" value="Pyr_redox_2"/>
    <property type="match status" value="1"/>
</dbReference>
<dbReference type="Pfam" id="PF02852">
    <property type="entry name" value="Pyr_redox_dim"/>
    <property type="match status" value="1"/>
</dbReference>
<dbReference type="PIRSF" id="PIRSF000350">
    <property type="entry name" value="Mercury_reductase_MerA"/>
    <property type="match status" value="1"/>
</dbReference>
<dbReference type="PRINTS" id="PR00368">
    <property type="entry name" value="FADPNR"/>
</dbReference>
<dbReference type="PRINTS" id="PR00411">
    <property type="entry name" value="PNDRDTASEI"/>
</dbReference>
<dbReference type="SUPFAM" id="SSF51905">
    <property type="entry name" value="FAD/NAD(P)-binding domain"/>
    <property type="match status" value="1"/>
</dbReference>
<dbReference type="SUPFAM" id="SSF55424">
    <property type="entry name" value="FAD/NAD-linked reductases, dimerisation (C-terminal) domain"/>
    <property type="match status" value="1"/>
</dbReference>
<dbReference type="PROSITE" id="PS00076">
    <property type="entry name" value="PYRIDINE_REDOX_1"/>
    <property type="match status" value="1"/>
</dbReference>
<protein>
    <recommendedName>
        <fullName>Glutathione reductase</fullName>
        <shortName>GR</shortName>
        <shortName>GRase</shortName>
        <ecNumber evidence="5">1.8.1.7</ecNumber>
    </recommendedName>
</protein>
<sequence length="464" mass="49999">MAPISKVFDYLVIGGGSGGLASARRAAKHGAKVALIEASGRLGGTCVNYGCVPKKIMWNIADLVAKMKTAKQNGFPNSQLGSFDWGMIKRKRDAYIGRLNGIYERNVNKDGVAYISGHASFVSPTEVAVDMNDGSGTQVFSAKYILIAVGGHPIWPSHIPGAEYGIDSDGFFELESQPKRVAIVGAGYIAVELAGVFAALGTETHMFIRQSKFLRKFDPIISDGIMDHFQHIGINVHTNSLEFKKVEKLPSGELCIHQQDGSTFNVDTLLWAIGRAPKIQGLRLEKAGVKTLPNGIIIADTYQRTNVPTVLSLGDVCGKLELTPVAIAAGRRLSDRLFGGIKDAHLDYEEVPSVVFAHPEAGTIGLTEQEAIDKYGESQIKVYNTKFNGLNYSMVEQEDKVPTTYKLVCAGPLQKVVGLHLVGDFSAEILQGFGVAIKMGATKSDFDSCVAIHPTSAEELVTLV</sequence>
<feature type="chain" id="PRO_0000067970" description="Glutathione reductase">
    <location>
        <begin position="1"/>
        <end position="464"/>
    </location>
</feature>
<feature type="active site" description="Proton acceptor" evidence="1">
    <location>
        <position position="453"/>
    </location>
</feature>
<feature type="binding site" evidence="3">
    <location>
        <position position="17"/>
    </location>
    <ligand>
        <name>FAD</name>
        <dbReference type="ChEBI" id="CHEBI:57692"/>
    </ligand>
</feature>
<feature type="binding site" evidence="1">
    <location>
        <position position="17"/>
    </location>
    <ligand>
        <name>glutathione</name>
        <dbReference type="ChEBI" id="CHEBI:57925"/>
    </ligand>
</feature>
<feature type="binding site" evidence="3">
    <location>
        <position position="18"/>
    </location>
    <ligand>
        <name>FAD</name>
        <dbReference type="ChEBI" id="CHEBI:57692"/>
    </ligand>
</feature>
<feature type="binding site" evidence="1">
    <location>
        <position position="24"/>
    </location>
    <ligand>
        <name>glutathione</name>
        <dbReference type="ChEBI" id="CHEBI:57925"/>
    </ligand>
</feature>
<feature type="binding site" evidence="3">
    <location>
        <position position="37"/>
    </location>
    <ligand>
        <name>FAD</name>
        <dbReference type="ChEBI" id="CHEBI:57692"/>
    </ligand>
</feature>
<feature type="binding site" evidence="3">
    <location>
        <position position="45"/>
    </location>
    <ligand>
        <name>FAD</name>
        <dbReference type="ChEBI" id="CHEBI:57692"/>
    </ligand>
</feature>
<feature type="binding site" evidence="3">
    <location>
        <position position="46"/>
    </location>
    <ligand>
        <name>FAD</name>
        <dbReference type="ChEBI" id="CHEBI:57692"/>
    </ligand>
</feature>
<feature type="binding site" evidence="3">
    <location>
        <position position="54"/>
    </location>
    <ligand>
        <name>FAD</name>
        <dbReference type="ChEBI" id="CHEBI:57692"/>
    </ligand>
</feature>
<feature type="binding site" evidence="1">
    <location>
        <position position="103"/>
    </location>
    <ligand>
        <name>glutathione</name>
        <dbReference type="ChEBI" id="CHEBI:57925"/>
    </ligand>
</feature>
<feature type="binding site" evidence="3">
    <location>
        <position position="119"/>
    </location>
    <ligand>
        <name>FAD</name>
        <dbReference type="ChEBI" id="CHEBI:57692"/>
    </ligand>
</feature>
<feature type="binding site" evidence="2">
    <location>
        <position position="186"/>
    </location>
    <ligand>
        <name>NADP(+)</name>
        <dbReference type="ChEBI" id="CHEBI:58349"/>
    </ligand>
</feature>
<feature type="binding site" evidence="2">
    <location>
        <position position="189"/>
    </location>
    <ligand>
        <name>NADP(+)</name>
        <dbReference type="ChEBI" id="CHEBI:58349"/>
    </ligand>
</feature>
<feature type="binding site" evidence="2">
    <location>
        <position position="192"/>
    </location>
    <ligand>
        <name>NADP(+)</name>
        <dbReference type="ChEBI" id="CHEBI:58349"/>
    </ligand>
</feature>
<feature type="binding site" evidence="2">
    <location>
        <position position="209"/>
    </location>
    <ligand>
        <name>NADP(+)</name>
        <dbReference type="ChEBI" id="CHEBI:58349"/>
    </ligand>
</feature>
<feature type="binding site" evidence="2">
    <location>
        <position position="215"/>
    </location>
    <ligand>
        <name>NADP(+)</name>
        <dbReference type="ChEBI" id="CHEBI:58349"/>
    </ligand>
</feature>
<feature type="binding site" evidence="2">
    <location>
        <position position="274"/>
    </location>
    <ligand>
        <name>NADP(+)</name>
        <dbReference type="ChEBI" id="CHEBI:58349"/>
    </ligand>
</feature>
<feature type="binding site" evidence="3">
    <location>
        <position position="315"/>
    </location>
    <ligand>
        <name>FAD</name>
        <dbReference type="ChEBI" id="CHEBI:57692"/>
    </ligand>
</feature>
<feature type="binding site" evidence="2">
    <location>
        <position position="321"/>
    </location>
    <ligand>
        <name>NADP(+)</name>
        <dbReference type="ChEBI" id="CHEBI:58349"/>
    </ligand>
</feature>
<feature type="binding site" evidence="3">
    <location>
        <position position="323"/>
    </location>
    <ligand>
        <name>FAD</name>
        <dbReference type="ChEBI" id="CHEBI:57692"/>
    </ligand>
</feature>
<feature type="binding site" evidence="1">
    <location>
        <position position="331"/>
    </location>
    <ligand>
        <name>glutathione</name>
        <dbReference type="ChEBI" id="CHEBI:57925"/>
    </ligand>
</feature>
<feature type="binding site" evidence="2">
    <location>
        <position position="354"/>
    </location>
    <ligand>
        <name>NADP(+)</name>
        <dbReference type="ChEBI" id="CHEBI:58349"/>
    </ligand>
</feature>
<feature type="binding site" evidence="3">
    <location>
        <position position="453"/>
    </location>
    <ligand>
        <name>FAD</name>
        <dbReference type="ChEBI" id="CHEBI:57692"/>
    </ligand>
</feature>
<feature type="disulfide bond" description="Redox-active" evidence="3">
    <location>
        <begin position="46"/>
        <end position="51"/>
    </location>
</feature>
<feature type="sequence conflict" description="In Ref. 1; AAC49809." evidence="6" ref="1">
    <original>V</original>
    <variation>VV</variation>
    <location>
        <position position="184"/>
    </location>
</feature>
<feature type="sequence conflict" description="In Ref. 1; AAC49809." evidence="6" ref="1">
    <original>LHLVGD</original>
    <variation>PTFSWR</variation>
    <location>
        <begin position="419"/>
        <end position="424"/>
    </location>
</feature>
<keyword id="KW-0963">Cytoplasm</keyword>
<keyword id="KW-1015">Disulfide bond</keyword>
<keyword id="KW-0274">FAD</keyword>
<keyword id="KW-0285">Flavoprotein</keyword>
<keyword id="KW-0496">Mitochondrion</keyword>
<keyword id="KW-0521">NADP</keyword>
<keyword id="KW-0560">Oxidoreductase</keyword>
<keyword id="KW-0676">Redox-active center</keyword>
<keyword id="KW-1185">Reference proteome</keyword>
<accession>P78965</accession>
<accession>A0AAN2HAG4</accession>
<accession>O13631</accession>
<name>GSHR_SCHPO</name>
<organism>
    <name type="scientific">Schizosaccharomyces pombe (strain 972 / ATCC 24843)</name>
    <name type="common">Fission yeast</name>
    <dbReference type="NCBI Taxonomy" id="284812"/>
    <lineage>
        <taxon>Eukaryota</taxon>
        <taxon>Fungi</taxon>
        <taxon>Dikarya</taxon>
        <taxon>Ascomycota</taxon>
        <taxon>Taphrinomycotina</taxon>
        <taxon>Schizosaccharomycetes</taxon>
        <taxon>Schizosaccharomycetales</taxon>
        <taxon>Schizosaccharomycetaceae</taxon>
        <taxon>Schizosaccharomyces</taxon>
    </lineage>
</organism>
<evidence type="ECO:0000250" key="1">
    <source>
        <dbReference type="UniProtKB" id="P00390"/>
    </source>
</evidence>
<evidence type="ECO:0000250" key="2">
    <source>
        <dbReference type="UniProtKB" id="P06715"/>
    </source>
</evidence>
<evidence type="ECO:0000250" key="3">
    <source>
        <dbReference type="UniProtKB" id="P41921"/>
    </source>
</evidence>
<evidence type="ECO:0000269" key="4">
    <source>
    </source>
</evidence>
<evidence type="ECO:0000269" key="5">
    <source>
    </source>
</evidence>
<evidence type="ECO:0000305" key="6"/>
<proteinExistence type="evidence at protein level"/>